<protein>
    <recommendedName>
        <fullName evidence="1">Large ribosomal subunit protein bL20</fullName>
    </recommendedName>
    <alternativeName>
        <fullName evidence="2">50S ribosomal protein L20</fullName>
    </alternativeName>
</protein>
<evidence type="ECO:0000255" key="1">
    <source>
        <dbReference type="HAMAP-Rule" id="MF_00382"/>
    </source>
</evidence>
<evidence type="ECO:0000305" key="2"/>
<reference key="1">
    <citation type="journal article" date="2009" name="BMC Genomics">
        <title>Complete genome sequence of the sugarcane nitrogen-fixing endophyte Gluconacetobacter diazotrophicus Pal5.</title>
        <authorList>
            <person name="Bertalan M."/>
            <person name="Albano R."/>
            <person name="de Padua V."/>
            <person name="Rouws L."/>
            <person name="Rojas C."/>
            <person name="Hemerly A."/>
            <person name="Teixeira K."/>
            <person name="Schwab S."/>
            <person name="Araujo J."/>
            <person name="Oliveira A."/>
            <person name="Franca L."/>
            <person name="Magalhaes V."/>
            <person name="Alqueres S."/>
            <person name="Cardoso A."/>
            <person name="Almeida W."/>
            <person name="Loureiro M.M."/>
            <person name="Nogueira E."/>
            <person name="Cidade D."/>
            <person name="Oliveira D."/>
            <person name="Simao T."/>
            <person name="Macedo J."/>
            <person name="Valadao A."/>
            <person name="Dreschsel M."/>
            <person name="Freitas F."/>
            <person name="Vidal M."/>
            <person name="Guedes H."/>
            <person name="Rodrigues E."/>
            <person name="Meneses C."/>
            <person name="Brioso P."/>
            <person name="Pozzer L."/>
            <person name="Figueiredo D."/>
            <person name="Montano H."/>
            <person name="Junior J."/>
            <person name="de Souza Filho G."/>
            <person name="Martin Quintana Flores V."/>
            <person name="Ferreira B."/>
            <person name="Branco A."/>
            <person name="Gonzalez P."/>
            <person name="Guillobel H."/>
            <person name="Lemos M."/>
            <person name="Seibel L."/>
            <person name="Macedo J."/>
            <person name="Alves-Ferreira M."/>
            <person name="Sachetto-Martins G."/>
            <person name="Coelho A."/>
            <person name="Santos E."/>
            <person name="Amaral G."/>
            <person name="Neves A."/>
            <person name="Pacheco A.B."/>
            <person name="Carvalho D."/>
            <person name="Lery L."/>
            <person name="Bisch P."/>
            <person name="Rossle S.C."/>
            <person name="Urmenyi T."/>
            <person name="Rael Pereira A."/>
            <person name="Silva R."/>
            <person name="Rondinelli E."/>
            <person name="von Kruger W."/>
            <person name="Martins O."/>
            <person name="Baldani J.I."/>
            <person name="Ferreira P.C."/>
        </authorList>
    </citation>
    <scope>NUCLEOTIDE SEQUENCE [LARGE SCALE GENOMIC DNA]</scope>
    <source>
        <strain>ATCC 49037 / DSM 5601 / CCUG 37298 / CIP 103539 / LMG 7603 / PAl5</strain>
    </source>
</reference>
<reference key="2">
    <citation type="journal article" date="2010" name="Stand. Genomic Sci.">
        <title>Two genome sequences of the same bacterial strain, Gluconacetobacter diazotrophicus PAl 5, suggest a new standard in genome sequence submission.</title>
        <authorList>
            <person name="Giongo A."/>
            <person name="Tyler H.L."/>
            <person name="Zipperer U.N."/>
            <person name="Triplett E.W."/>
        </authorList>
    </citation>
    <scope>NUCLEOTIDE SEQUENCE [LARGE SCALE GENOMIC DNA]</scope>
    <source>
        <strain>ATCC 49037 / DSM 5601 / CCUG 37298 / CIP 103539 / LMG 7603 / PAl5</strain>
    </source>
</reference>
<comment type="function">
    <text evidence="1">Binds directly to 23S ribosomal RNA and is necessary for the in vitro assembly process of the 50S ribosomal subunit. It is not involved in the protein synthesizing functions of that subunit.</text>
</comment>
<comment type="similarity">
    <text evidence="1">Belongs to the bacterial ribosomal protein bL20 family.</text>
</comment>
<accession>A9H170</accession>
<accession>B5ZJM0</accession>
<sequence>MARVKRGVTTHARHKKVLEQSKGFRGRSSTNYRIALERLEKALRYAYRDRRNKKRDFRALWIQRINAAVREHGLTYSKFIFGLDKAGIEIDRKVLAAIAFDDAATFAEIVKKAQAALAA</sequence>
<proteinExistence type="inferred from homology"/>
<keyword id="KW-1185">Reference proteome</keyword>
<keyword id="KW-0687">Ribonucleoprotein</keyword>
<keyword id="KW-0689">Ribosomal protein</keyword>
<keyword id="KW-0694">RNA-binding</keyword>
<keyword id="KW-0699">rRNA-binding</keyword>
<feature type="chain" id="PRO_1000080075" description="Large ribosomal subunit protein bL20">
    <location>
        <begin position="1"/>
        <end position="119"/>
    </location>
</feature>
<organism>
    <name type="scientific">Gluconacetobacter diazotrophicus (strain ATCC 49037 / DSM 5601 / CCUG 37298 / CIP 103539 / LMG 7603 / PAl5)</name>
    <dbReference type="NCBI Taxonomy" id="272568"/>
    <lineage>
        <taxon>Bacteria</taxon>
        <taxon>Pseudomonadati</taxon>
        <taxon>Pseudomonadota</taxon>
        <taxon>Alphaproteobacteria</taxon>
        <taxon>Acetobacterales</taxon>
        <taxon>Acetobacteraceae</taxon>
        <taxon>Gluconacetobacter</taxon>
    </lineage>
</organism>
<gene>
    <name evidence="1" type="primary">rplT</name>
    <name type="ordered locus">GDI3273</name>
    <name type="ordered locus">Gdia_3092</name>
</gene>
<name>RL20_GLUDA</name>
<dbReference type="EMBL" id="AM889285">
    <property type="protein sequence ID" value="CAP57216.1"/>
    <property type="molecule type" value="Genomic_DNA"/>
</dbReference>
<dbReference type="EMBL" id="CP001189">
    <property type="protein sequence ID" value="ACI52822.1"/>
    <property type="molecule type" value="Genomic_DNA"/>
</dbReference>
<dbReference type="RefSeq" id="WP_012227752.1">
    <property type="nucleotide sequence ID" value="NC_010125.1"/>
</dbReference>
<dbReference type="SMR" id="A9H170"/>
<dbReference type="STRING" id="272568.GDI3273"/>
<dbReference type="KEGG" id="gdi:GDI3273"/>
<dbReference type="KEGG" id="gdj:Gdia_3092"/>
<dbReference type="eggNOG" id="COG0292">
    <property type="taxonomic scope" value="Bacteria"/>
</dbReference>
<dbReference type="HOGENOM" id="CLU_123265_0_1_5"/>
<dbReference type="OrthoDB" id="9808966at2"/>
<dbReference type="Proteomes" id="UP000001176">
    <property type="component" value="Chromosome"/>
</dbReference>
<dbReference type="GO" id="GO:1990904">
    <property type="term" value="C:ribonucleoprotein complex"/>
    <property type="evidence" value="ECO:0007669"/>
    <property type="project" value="UniProtKB-KW"/>
</dbReference>
<dbReference type="GO" id="GO:0005840">
    <property type="term" value="C:ribosome"/>
    <property type="evidence" value="ECO:0007669"/>
    <property type="project" value="UniProtKB-KW"/>
</dbReference>
<dbReference type="GO" id="GO:0019843">
    <property type="term" value="F:rRNA binding"/>
    <property type="evidence" value="ECO:0007669"/>
    <property type="project" value="UniProtKB-UniRule"/>
</dbReference>
<dbReference type="GO" id="GO:0003735">
    <property type="term" value="F:structural constituent of ribosome"/>
    <property type="evidence" value="ECO:0007669"/>
    <property type="project" value="InterPro"/>
</dbReference>
<dbReference type="GO" id="GO:0000027">
    <property type="term" value="P:ribosomal large subunit assembly"/>
    <property type="evidence" value="ECO:0007669"/>
    <property type="project" value="UniProtKB-UniRule"/>
</dbReference>
<dbReference type="GO" id="GO:0006412">
    <property type="term" value="P:translation"/>
    <property type="evidence" value="ECO:0007669"/>
    <property type="project" value="InterPro"/>
</dbReference>
<dbReference type="CDD" id="cd07026">
    <property type="entry name" value="Ribosomal_L20"/>
    <property type="match status" value="1"/>
</dbReference>
<dbReference type="FunFam" id="1.10.1900.20:FF:000001">
    <property type="entry name" value="50S ribosomal protein L20"/>
    <property type="match status" value="1"/>
</dbReference>
<dbReference type="Gene3D" id="6.10.160.10">
    <property type="match status" value="1"/>
</dbReference>
<dbReference type="Gene3D" id="1.10.1900.20">
    <property type="entry name" value="Ribosomal protein L20"/>
    <property type="match status" value="1"/>
</dbReference>
<dbReference type="HAMAP" id="MF_00382">
    <property type="entry name" value="Ribosomal_bL20"/>
    <property type="match status" value="1"/>
</dbReference>
<dbReference type="InterPro" id="IPR005813">
    <property type="entry name" value="Ribosomal_bL20"/>
</dbReference>
<dbReference type="InterPro" id="IPR049946">
    <property type="entry name" value="RIBOSOMAL_L20_CS"/>
</dbReference>
<dbReference type="InterPro" id="IPR035566">
    <property type="entry name" value="Ribosomal_protein_bL20_C"/>
</dbReference>
<dbReference type="NCBIfam" id="TIGR01032">
    <property type="entry name" value="rplT_bact"/>
    <property type="match status" value="1"/>
</dbReference>
<dbReference type="PANTHER" id="PTHR10986">
    <property type="entry name" value="39S RIBOSOMAL PROTEIN L20"/>
    <property type="match status" value="1"/>
</dbReference>
<dbReference type="Pfam" id="PF00453">
    <property type="entry name" value="Ribosomal_L20"/>
    <property type="match status" value="1"/>
</dbReference>
<dbReference type="PRINTS" id="PR00062">
    <property type="entry name" value="RIBOSOMALL20"/>
</dbReference>
<dbReference type="SUPFAM" id="SSF74731">
    <property type="entry name" value="Ribosomal protein L20"/>
    <property type="match status" value="1"/>
</dbReference>
<dbReference type="PROSITE" id="PS00937">
    <property type="entry name" value="RIBOSOMAL_L20"/>
    <property type="match status" value="1"/>
</dbReference>